<accession>P83925</accession>
<accession>P82698</accession>
<protein>
    <recommendedName>
        <fullName>Periviscerokinin-1</fullName>
        <shortName>GroPo-PVK-1</shortName>
        <shortName>PVK-1</shortName>
    </recommendedName>
</protein>
<dbReference type="GO" id="GO:0005576">
    <property type="term" value="C:extracellular region"/>
    <property type="evidence" value="ECO:0007669"/>
    <property type="project" value="UniProtKB-SubCell"/>
</dbReference>
<dbReference type="GO" id="GO:0007218">
    <property type="term" value="P:neuropeptide signaling pathway"/>
    <property type="evidence" value="ECO:0007669"/>
    <property type="project" value="UniProtKB-KW"/>
</dbReference>
<dbReference type="InterPro" id="IPR013231">
    <property type="entry name" value="Periviscerokinin"/>
</dbReference>
<dbReference type="Pfam" id="PF08259">
    <property type="entry name" value="Periviscerokin"/>
    <property type="match status" value="1"/>
</dbReference>
<sequence length="11" mass="1091">GSSGLIPFGRT</sequence>
<feature type="peptide" id="PRO_0000044245" description="Periviscerokinin-1">
    <location>
        <begin position="1"/>
        <end position="11"/>
    </location>
</feature>
<feature type="modified residue" description="Threonine amide" evidence="1 2">
    <location>
        <position position="11"/>
    </location>
</feature>
<comment type="function">
    <text evidence="1">Mediates visceral muscle contractile activity (myotropic activity).</text>
</comment>
<comment type="subcellular location">
    <subcellularLocation>
        <location>Secreted</location>
    </subcellularLocation>
</comment>
<comment type="mass spectrometry" mass="1090.6" method="MALDI" evidence="1"/>
<comment type="similarity">
    <text evidence="3">Belongs to the periviscerokinin family.</text>
</comment>
<evidence type="ECO:0000269" key="1">
    <source>
    </source>
</evidence>
<evidence type="ECO:0000269" key="2">
    <source>
    </source>
</evidence>
<evidence type="ECO:0000305" key="3"/>
<keyword id="KW-0027">Amidation</keyword>
<keyword id="KW-0903">Direct protein sequencing</keyword>
<keyword id="KW-0527">Neuropeptide</keyword>
<keyword id="KW-0964">Secreted</keyword>
<organism>
    <name type="scientific">Gromphadorhina portentosa</name>
    <name type="common">Madagascan hissing cockroach</name>
    <dbReference type="NCBI Taxonomy" id="36953"/>
    <lineage>
        <taxon>Eukaryota</taxon>
        <taxon>Metazoa</taxon>
        <taxon>Ecdysozoa</taxon>
        <taxon>Arthropoda</taxon>
        <taxon>Hexapoda</taxon>
        <taxon>Insecta</taxon>
        <taxon>Pterygota</taxon>
        <taxon>Neoptera</taxon>
        <taxon>Polyneoptera</taxon>
        <taxon>Dictyoptera</taxon>
        <taxon>Blattodea</taxon>
        <taxon>Blaberoidea</taxon>
        <taxon>Blaberidae</taxon>
        <taxon>Oxyhaloinae</taxon>
        <taxon>Gromphadorhina</taxon>
    </lineage>
</organism>
<proteinExistence type="evidence at protein level"/>
<reference key="1">
    <citation type="journal article" date="2000" name="Eur. J. Biochem.">
        <title>Identification of novel periviscerokinins from single neurohaemal release sites in insects. MS/MS fragmentation complemented by Edman degradation.</title>
        <authorList>
            <person name="Predel R."/>
            <person name="Kellner R."/>
            <person name="Baggerman G."/>
            <person name="Steinmetzer T."/>
            <person name="Schoofs L."/>
        </authorList>
    </citation>
    <scope>PROTEIN SEQUENCE</scope>
    <scope>FUNCTION</scope>
    <scope>MASS SPECTROMETRY</scope>
    <scope>AMIDATION AT THR-11</scope>
    <source>
        <tissue>Abdominal perisympathetic organs</tissue>
    </source>
</reference>
<reference key="2">
    <citation type="journal article" date="2009" name="BMC Evol. Biol.">
        <title>A proteomic approach for studying insect phylogeny: CAPA peptides of ancient insect taxa (Dictyoptera, Blattoptera) as a test case.</title>
        <authorList>
            <person name="Roth S."/>
            <person name="Fromm B."/>
            <person name="Gaede G."/>
            <person name="Predel R."/>
        </authorList>
    </citation>
    <scope>PROTEIN SEQUENCE</scope>
    <scope>AMIDATION AT THR-11</scope>
    <source>
        <tissue>Abdominal perisympathetic organs</tissue>
    </source>
</reference>
<name>PVK1_GROPO</name>